<protein>
    <recommendedName>
        <fullName evidence="1">Gamma-glutamyl phosphate reductase</fullName>
        <shortName evidence="1">GPR</shortName>
        <ecNumber evidence="1">1.2.1.41</ecNumber>
    </recommendedName>
    <alternativeName>
        <fullName evidence="1">Glutamate-5-semialdehyde dehydrogenase</fullName>
    </alternativeName>
    <alternativeName>
        <fullName evidence="1">Glutamyl-gamma-semialdehyde dehydrogenase</fullName>
        <shortName evidence="1">GSA dehydrogenase</shortName>
    </alternativeName>
</protein>
<accession>A6VMV2</accession>
<dbReference type="EC" id="1.2.1.41" evidence="1"/>
<dbReference type="EMBL" id="CP000746">
    <property type="protein sequence ID" value="ABR74299.1"/>
    <property type="molecule type" value="Genomic_DNA"/>
</dbReference>
<dbReference type="RefSeq" id="WP_012072676.1">
    <property type="nucleotide sequence ID" value="NC_009655.1"/>
</dbReference>
<dbReference type="SMR" id="A6VMV2"/>
<dbReference type="STRING" id="339671.Asuc_0931"/>
<dbReference type="KEGG" id="asu:Asuc_0931"/>
<dbReference type="eggNOG" id="COG0014">
    <property type="taxonomic scope" value="Bacteria"/>
</dbReference>
<dbReference type="HOGENOM" id="CLU_030231_0_0_6"/>
<dbReference type="OrthoDB" id="9809970at2"/>
<dbReference type="UniPathway" id="UPA00098">
    <property type="reaction ID" value="UER00360"/>
</dbReference>
<dbReference type="Proteomes" id="UP000001114">
    <property type="component" value="Chromosome"/>
</dbReference>
<dbReference type="GO" id="GO:0005737">
    <property type="term" value="C:cytoplasm"/>
    <property type="evidence" value="ECO:0007669"/>
    <property type="project" value="UniProtKB-SubCell"/>
</dbReference>
<dbReference type="GO" id="GO:0004350">
    <property type="term" value="F:glutamate-5-semialdehyde dehydrogenase activity"/>
    <property type="evidence" value="ECO:0007669"/>
    <property type="project" value="UniProtKB-UniRule"/>
</dbReference>
<dbReference type="GO" id="GO:0050661">
    <property type="term" value="F:NADP binding"/>
    <property type="evidence" value="ECO:0007669"/>
    <property type="project" value="InterPro"/>
</dbReference>
<dbReference type="GO" id="GO:0055129">
    <property type="term" value="P:L-proline biosynthetic process"/>
    <property type="evidence" value="ECO:0007669"/>
    <property type="project" value="UniProtKB-UniRule"/>
</dbReference>
<dbReference type="CDD" id="cd07079">
    <property type="entry name" value="ALDH_F18-19_ProA-GPR"/>
    <property type="match status" value="1"/>
</dbReference>
<dbReference type="FunFam" id="3.40.309.10:FF:000006">
    <property type="entry name" value="Gamma-glutamyl phosphate reductase"/>
    <property type="match status" value="1"/>
</dbReference>
<dbReference type="Gene3D" id="3.40.605.10">
    <property type="entry name" value="Aldehyde Dehydrogenase, Chain A, domain 1"/>
    <property type="match status" value="1"/>
</dbReference>
<dbReference type="Gene3D" id="3.40.309.10">
    <property type="entry name" value="Aldehyde Dehydrogenase, Chain A, domain 2"/>
    <property type="match status" value="1"/>
</dbReference>
<dbReference type="HAMAP" id="MF_00412">
    <property type="entry name" value="ProA"/>
    <property type="match status" value="1"/>
</dbReference>
<dbReference type="InterPro" id="IPR016161">
    <property type="entry name" value="Ald_DH/histidinol_DH"/>
</dbReference>
<dbReference type="InterPro" id="IPR016163">
    <property type="entry name" value="Ald_DH_C"/>
</dbReference>
<dbReference type="InterPro" id="IPR016162">
    <property type="entry name" value="Ald_DH_N"/>
</dbReference>
<dbReference type="InterPro" id="IPR015590">
    <property type="entry name" value="Aldehyde_DH_dom"/>
</dbReference>
<dbReference type="InterPro" id="IPR020593">
    <property type="entry name" value="G-glutamylP_reductase_CS"/>
</dbReference>
<dbReference type="InterPro" id="IPR012134">
    <property type="entry name" value="Glu-5-SA_DH"/>
</dbReference>
<dbReference type="InterPro" id="IPR000965">
    <property type="entry name" value="GPR_dom"/>
</dbReference>
<dbReference type="NCBIfam" id="NF001221">
    <property type="entry name" value="PRK00197.1"/>
    <property type="match status" value="1"/>
</dbReference>
<dbReference type="NCBIfam" id="TIGR00407">
    <property type="entry name" value="proA"/>
    <property type="match status" value="1"/>
</dbReference>
<dbReference type="PANTHER" id="PTHR11063:SF8">
    <property type="entry name" value="DELTA-1-PYRROLINE-5-CARBOXYLATE SYNTHASE"/>
    <property type="match status" value="1"/>
</dbReference>
<dbReference type="PANTHER" id="PTHR11063">
    <property type="entry name" value="GLUTAMATE SEMIALDEHYDE DEHYDROGENASE"/>
    <property type="match status" value="1"/>
</dbReference>
<dbReference type="Pfam" id="PF00171">
    <property type="entry name" value="Aldedh"/>
    <property type="match status" value="1"/>
</dbReference>
<dbReference type="PIRSF" id="PIRSF000151">
    <property type="entry name" value="GPR"/>
    <property type="match status" value="1"/>
</dbReference>
<dbReference type="SUPFAM" id="SSF53720">
    <property type="entry name" value="ALDH-like"/>
    <property type="match status" value="1"/>
</dbReference>
<dbReference type="PROSITE" id="PS01223">
    <property type="entry name" value="PROA"/>
    <property type="match status" value="1"/>
</dbReference>
<reference key="1">
    <citation type="journal article" date="2010" name="BMC Genomics">
        <title>A genomic perspective on the potential of Actinobacillus succinogenes for industrial succinate production.</title>
        <authorList>
            <person name="McKinlay J.B."/>
            <person name="Laivenieks M."/>
            <person name="Schindler B.D."/>
            <person name="McKinlay A.A."/>
            <person name="Siddaramappa S."/>
            <person name="Challacombe J.F."/>
            <person name="Lowry S.R."/>
            <person name="Clum A."/>
            <person name="Lapidus A.L."/>
            <person name="Burkhart K.B."/>
            <person name="Harkins V."/>
            <person name="Vieille C."/>
        </authorList>
    </citation>
    <scope>NUCLEOTIDE SEQUENCE [LARGE SCALE GENOMIC DNA]</scope>
    <source>
        <strain>ATCC 55618 / DSM 22257 / CCUG 43843 / 130Z</strain>
    </source>
</reference>
<keyword id="KW-0028">Amino-acid biosynthesis</keyword>
<keyword id="KW-0963">Cytoplasm</keyword>
<keyword id="KW-0521">NADP</keyword>
<keyword id="KW-0560">Oxidoreductase</keyword>
<keyword id="KW-0641">Proline biosynthesis</keyword>
<keyword id="KW-1185">Reference proteome</keyword>
<feature type="chain" id="PRO_1000072277" description="Gamma-glutamyl phosphate reductase">
    <location>
        <begin position="1"/>
        <end position="416"/>
    </location>
</feature>
<name>PROA_ACTSZ</name>
<proteinExistence type="inferred from homology"/>
<organism>
    <name type="scientific">Actinobacillus succinogenes (strain ATCC 55618 / DSM 22257 / CCUG 43843 / 130Z)</name>
    <dbReference type="NCBI Taxonomy" id="339671"/>
    <lineage>
        <taxon>Bacteria</taxon>
        <taxon>Pseudomonadati</taxon>
        <taxon>Pseudomonadota</taxon>
        <taxon>Gammaproteobacteria</taxon>
        <taxon>Pasteurellales</taxon>
        <taxon>Pasteurellaceae</taxon>
        <taxon>Actinobacillus</taxon>
    </lineage>
</organism>
<sequence>MTNLEVMGKAARQAAFELSQLSAGDKNYALQMIAEQLESQQQQILAANARDIDEARINGLNDAIIDRLLLTPERLRGIANDVRHVISLADPVGKLIDGGILDSGLKLERIRVPVGVIGTIYEARPNVTIDVASLCLKTGNAVILRGGKETRHSNRILVEVVQNALEKAGLPKTAVQAITDPDRALVMELLKLDRYVDMIIPRGGAGLHALCKQHATIPVIIGGIGVCHTFVEQSADQNRAISVIKNAKTQRPSTCNTLETLLIQESIAHEFLPKLAAELPVKYYADKTAYSILHHAGAEVLAVTEDDLRKEWLCTNLNVVIVQDIEAAVAHIREYGSQHSEAILTESLQLARRFVAQVDSAAVYVNASTRFTDGGQFGLGAEVAVSTQKLHARGPMGLEALTTYKWVATGDYTVRS</sequence>
<gene>
    <name evidence="1" type="primary">proA</name>
    <name type="ordered locus">Asuc_0931</name>
</gene>
<evidence type="ECO:0000255" key="1">
    <source>
        <dbReference type="HAMAP-Rule" id="MF_00412"/>
    </source>
</evidence>
<comment type="function">
    <text evidence="1">Catalyzes the NADPH-dependent reduction of L-glutamate 5-phosphate into L-glutamate 5-semialdehyde and phosphate. The product spontaneously undergoes cyclization to form 1-pyrroline-5-carboxylate.</text>
</comment>
<comment type="catalytic activity">
    <reaction evidence="1">
        <text>L-glutamate 5-semialdehyde + phosphate + NADP(+) = L-glutamyl 5-phosphate + NADPH + H(+)</text>
        <dbReference type="Rhea" id="RHEA:19541"/>
        <dbReference type="ChEBI" id="CHEBI:15378"/>
        <dbReference type="ChEBI" id="CHEBI:43474"/>
        <dbReference type="ChEBI" id="CHEBI:57783"/>
        <dbReference type="ChEBI" id="CHEBI:58066"/>
        <dbReference type="ChEBI" id="CHEBI:58274"/>
        <dbReference type="ChEBI" id="CHEBI:58349"/>
        <dbReference type="EC" id="1.2.1.41"/>
    </reaction>
</comment>
<comment type="pathway">
    <text evidence="1">Amino-acid biosynthesis; L-proline biosynthesis; L-glutamate 5-semialdehyde from L-glutamate: step 2/2.</text>
</comment>
<comment type="subcellular location">
    <subcellularLocation>
        <location evidence="1">Cytoplasm</location>
    </subcellularLocation>
</comment>
<comment type="similarity">
    <text evidence="1">Belongs to the gamma-glutamyl phosphate reductase family.</text>
</comment>